<name>SYFB_CUPPJ</name>
<keyword id="KW-0030">Aminoacyl-tRNA synthetase</keyword>
<keyword id="KW-0067">ATP-binding</keyword>
<keyword id="KW-0963">Cytoplasm</keyword>
<keyword id="KW-0436">Ligase</keyword>
<keyword id="KW-0460">Magnesium</keyword>
<keyword id="KW-0479">Metal-binding</keyword>
<keyword id="KW-0547">Nucleotide-binding</keyword>
<keyword id="KW-0648">Protein biosynthesis</keyword>
<keyword id="KW-0694">RNA-binding</keyword>
<keyword id="KW-0820">tRNA-binding</keyword>
<organism>
    <name type="scientific">Cupriavidus pinatubonensis (strain JMP 134 / LMG 1197)</name>
    <name type="common">Cupriavidus necator (strain JMP 134)</name>
    <dbReference type="NCBI Taxonomy" id="264198"/>
    <lineage>
        <taxon>Bacteria</taxon>
        <taxon>Pseudomonadati</taxon>
        <taxon>Pseudomonadota</taxon>
        <taxon>Betaproteobacteria</taxon>
        <taxon>Burkholderiales</taxon>
        <taxon>Burkholderiaceae</taxon>
        <taxon>Cupriavidus</taxon>
    </lineage>
</organism>
<feature type="chain" id="PRO_0000232081" description="Phenylalanine--tRNA ligase beta subunit">
    <location>
        <begin position="1"/>
        <end position="815"/>
    </location>
</feature>
<feature type="domain" description="tRNA-binding" evidence="1">
    <location>
        <begin position="40"/>
        <end position="155"/>
    </location>
</feature>
<feature type="domain" description="B5" evidence="1">
    <location>
        <begin position="406"/>
        <end position="485"/>
    </location>
</feature>
<feature type="domain" description="FDX-ACB" evidence="1">
    <location>
        <begin position="712"/>
        <end position="814"/>
    </location>
</feature>
<feature type="binding site" evidence="1">
    <location>
        <position position="463"/>
    </location>
    <ligand>
        <name>Mg(2+)</name>
        <dbReference type="ChEBI" id="CHEBI:18420"/>
        <note>shared with alpha subunit</note>
    </ligand>
</feature>
<feature type="binding site" evidence="1">
    <location>
        <position position="469"/>
    </location>
    <ligand>
        <name>Mg(2+)</name>
        <dbReference type="ChEBI" id="CHEBI:18420"/>
        <note>shared with alpha subunit</note>
    </ligand>
</feature>
<feature type="binding site" evidence="1">
    <location>
        <position position="472"/>
    </location>
    <ligand>
        <name>Mg(2+)</name>
        <dbReference type="ChEBI" id="CHEBI:18420"/>
        <note>shared with alpha subunit</note>
    </ligand>
</feature>
<feature type="binding site" evidence="1">
    <location>
        <position position="473"/>
    </location>
    <ligand>
        <name>Mg(2+)</name>
        <dbReference type="ChEBI" id="CHEBI:18420"/>
        <note>shared with alpha subunit</note>
    </ligand>
</feature>
<evidence type="ECO:0000255" key="1">
    <source>
        <dbReference type="HAMAP-Rule" id="MF_00283"/>
    </source>
</evidence>
<dbReference type="EC" id="6.1.1.20" evidence="1"/>
<dbReference type="EMBL" id="CP000090">
    <property type="protein sequence ID" value="AAZ60650.1"/>
    <property type="molecule type" value="Genomic_DNA"/>
</dbReference>
<dbReference type="SMR" id="Q472N3"/>
<dbReference type="STRING" id="264198.Reut_A1280"/>
<dbReference type="KEGG" id="reu:Reut_A1280"/>
<dbReference type="eggNOG" id="COG0072">
    <property type="taxonomic scope" value="Bacteria"/>
</dbReference>
<dbReference type="eggNOG" id="COG0073">
    <property type="taxonomic scope" value="Bacteria"/>
</dbReference>
<dbReference type="HOGENOM" id="CLU_016891_0_0_4"/>
<dbReference type="OrthoDB" id="9805455at2"/>
<dbReference type="GO" id="GO:0009328">
    <property type="term" value="C:phenylalanine-tRNA ligase complex"/>
    <property type="evidence" value="ECO:0007669"/>
    <property type="project" value="TreeGrafter"/>
</dbReference>
<dbReference type="GO" id="GO:0005524">
    <property type="term" value="F:ATP binding"/>
    <property type="evidence" value="ECO:0007669"/>
    <property type="project" value="UniProtKB-UniRule"/>
</dbReference>
<dbReference type="GO" id="GO:0000287">
    <property type="term" value="F:magnesium ion binding"/>
    <property type="evidence" value="ECO:0007669"/>
    <property type="project" value="UniProtKB-UniRule"/>
</dbReference>
<dbReference type="GO" id="GO:0004826">
    <property type="term" value="F:phenylalanine-tRNA ligase activity"/>
    <property type="evidence" value="ECO:0007669"/>
    <property type="project" value="UniProtKB-UniRule"/>
</dbReference>
<dbReference type="GO" id="GO:0000049">
    <property type="term" value="F:tRNA binding"/>
    <property type="evidence" value="ECO:0007669"/>
    <property type="project" value="UniProtKB-KW"/>
</dbReference>
<dbReference type="GO" id="GO:0006432">
    <property type="term" value="P:phenylalanyl-tRNA aminoacylation"/>
    <property type="evidence" value="ECO:0007669"/>
    <property type="project" value="UniProtKB-UniRule"/>
</dbReference>
<dbReference type="CDD" id="cd00769">
    <property type="entry name" value="PheRS_beta_core"/>
    <property type="match status" value="1"/>
</dbReference>
<dbReference type="CDD" id="cd02796">
    <property type="entry name" value="tRNA_bind_bactPheRS"/>
    <property type="match status" value="1"/>
</dbReference>
<dbReference type="FunFam" id="2.40.50.140:FF:000045">
    <property type="entry name" value="Phenylalanine--tRNA ligase beta subunit"/>
    <property type="match status" value="1"/>
</dbReference>
<dbReference type="FunFam" id="3.30.56.10:FF:000002">
    <property type="entry name" value="Phenylalanine--tRNA ligase beta subunit"/>
    <property type="match status" value="1"/>
</dbReference>
<dbReference type="FunFam" id="3.30.930.10:FF:000022">
    <property type="entry name" value="Phenylalanine--tRNA ligase beta subunit"/>
    <property type="match status" value="1"/>
</dbReference>
<dbReference type="Gene3D" id="3.30.56.10">
    <property type="match status" value="2"/>
</dbReference>
<dbReference type="Gene3D" id="3.30.930.10">
    <property type="entry name" value="Bira Bifunctional Protein, Domain 2"/>
    <property type="match status" value="1"/>
</dbReference>
<dbReference type="Gene3D" id="3.30.70.380">
    <property type="entry name" value="Ferrodoxin-fold anticodon-binding domain"/>
    <property type="match status" value="1"/>
</dbReference>
<dbReference type="Gene3D" id="2.40.50.140">
    <property type="entry name" value="Nucleic acid-binding proteins"/>
    <property type="match status" value="1"/>
</dbReference>
<dbReference type="Gene3D" id="3.50.40.10">
    <property type="entry name" value="Phenylalanyl-trna Synthetase, Chain B, domain 3"/>
    <property type="match status" value="1"/>
</dbReference>
<dbReference type="HAMAP" id="MF_00283">
    <property type="entry name" value="Phe_tRNA_synth_beta1"/>
    <property type="match status" value="1"/>
</dbReference>
<dbReference type="InterPro" id="IPR045864">
    <property type="entry name" value="aa-tRNA-synth_II/BPL/LPL"/>
</dbReference>
<dbReference type="InterPro" id="IPR005146">
    <property type="entry name" value="B3/B4_tRNA-bd"/>
</dbReference>
<dbReference type="InterPro" id="IPR009061">
    <property type="entry name" value="DNA-bd_dom_put_sf"/>
</dbReference>
<dbReference type="InterPro" id="IPR005121">
    <property type="entry name" value="Fdx_antiC-bd"/>
</dbReference>
<dbReference type="InterPro" id="IPR036690">
    <property type="entry name" value="Fdx_antiC-bd_sf"/>
</dbReference>
<dbReference type="InterPro" id="IPR012340">
    <property type="entry name" value="NA-bd_OB-fold"/>
</dbReference>
<dbReference type="InterPro" id="IPR045060">
    <property type="entry name" value="Phe-tRNA-ligase_IIc_bsu"/>
</dbReference>
<dbReference type="InterPro" id="IPR004532">
    <property type="entry name" value="Phe-tRNA-ligase_IIc_bsu_bact"/>
</dbReference>
<dbReference type="InterPro" id="IPR020825">
    <property type="entry name" value="Phe-tRNA_synthase-like_B3/B4"/>
</dbReference>
<dbReference type="InterPro" id="IPR041616">
    <property type="entry name" value="PheRS_beta_core"/>
</dbReference>
<dbReference type="InterPro" id="IPR002547">
    <property type="entry name" value="tRNA-bd_dom"/>
</dbReference>
<dbReference type="InterPro" id="IPR033714">
    <property type="entry name" value="tRNA_bind_bactPheRS"/>
</dbReference>
<dbReference type="InterPro" id="IPR005147">
    <property type="entry name" value="tRNA_synthase_B5-dom"/>
</dbReference>
<dbReference type="NCBIfam" id="TIGR00472">
    <property type="entry name" value="pheT_bact"/>
    <property type="match status" value="1"/>
</dbReference>
<dbReference type="NCBIfam" id="NF045760">
    <property type="entry name" value="YtpR"/>
    <property type="match status" value="1"/>
</dbReference>
<dbReference type="PANTHER" id="PTHR10947:SF0">
    <property type="entry name" value="PHENYLALANINE--TRNA LIGASE BETA SUBUNIT"/>
    <property type="match status" value="1"/>
</dbReference>
<dbReference type="PANTHER" id="PTHR10947">
    <property type="entry name" value="PHENYLALANYL-TRNA SYNTHETASE BETA CHAIN AND LEUCINE-RICH REPEAT-CONTAINING PROTEIN 47"/>
    <property type="match status" value="1"/>
</dbReference>
<dbReference type="Pfam" id="PF03483">
    <property type="entry name" value="B3_4"/>
    <property type="match status" value="1"/>
</dbReference>
<dbReference type="Pfam" id="PF03484">
    <property type="entry name" value="B5"/>
    <property type="match status" value="1"/>
</dbReference>
<dbReference type="Pfam" id="PF03147">
    <property type="entry name" value="FDX-ACB"/>
    <property type="match status" value="1"/>
</dbReference>
<dbReference type="Pfam" id="PF01588">
    <property type="entry name" value="tRNA_bind"/>
    <property type="match status" value="1"/>
</dbReference>
<dbReference type="Pfam" id="PF17759">
    <property type="entry name" value="tRNA_synthFbeta"/>
    <property type="match status" value="1"/>
</dbReference>
<dbReference type="SMART" id="SM00873">
    <property type="entry name" value="B3_4"/>
    <property type="match status" value="1"/>
</dbReference>
<dbReference type="SMART" id="SM00874">
    <property type="entry name" value="B5"/>
    <property type="match status" value="1"/>
</dbReference>
<dbReference type="SMART" id="SM00896">
    <property type="entry name" value="FDX-ACB"/>
    <property type="match status" value="1"/>
</dbReference>
<dbReference type="SUPFAM" id="SSF54991">
    <property type="entry name" value="Anticodon-binding domain of PheRS"/>
    <property type="match status" value="1"/>
</dbReference>
<dbReference type="SUPFAM" id="SSF55681">
    <property type="entry name" value="Class II aaRS and biotin synthetases"/>
    <property type="match status" value="1"/>
</dbReference>
<dbReference type="SUPFAM" id="SSF50249">
    <property type="entry name" value="Nucleic acid-binding proteins"/>
    <property type="match status" value="1"/>
</dbReference>
<dbReference type="SUPFAM" id="SSF56037">
    <property type="entry name" value="PheT/TilS domain"/>
    <property type="match status" value="1"/>
</dbReference>
<dbReference type="SUPFAM" id="SSF46955">
    <property type="entry name" value="Putative DNA-binding domain"/>
    <property type="match status" value="1"/>
</dbReference>
<dbReference type="PROSITE" id="PS51483">
    <property type="entry name" value="B5"/>
    <property type="match status" value="1"/>
</dbReference>
<dbReference type="PROSITE" id="PS51447">
    <property type="entry name" value="FDX_ACB"/>
    <property type="match status" value="1"/>
</dbReference>
<dbReference type="PROSITE" id="PS50886">
    <property type="entry name" value="TRBD"/>
    <property type="match status" value="1"/>
</dbReference>
<sequence length="815" mass="89706">MQFSESWLRTFANPEKISTDALSHSLTMAGLEVEEVGPVAPPFDKIVVAHVLSTERHPNADRLNVCQVDAGTGETLQIVCGAPNVKPGIKVPCALVGAVLPPAEAEGKPFEIKVGKLRGVESYGMLCSARELKLSEDHGGLLVLPEDAPVGQNIREYLDLDDQVFIIKLTPNKADCLSIHGVAREVSALTGATLTLPDMKPVAVTIDDKLPVKVSAPDLCGRFSGRVIRGVNARAATPAWMVQRLERSGQRSISAMVDISNYVMLELGRPSHVFDLDKIHGGLDVRWGRKGEQIKLLNGNTIEVDEQVGVIADDKEIESLAGIMGGDSTAVTLDTTNIYLEAAFWWPSAIQGRARRYNFSTDAAHRFERGVDYATTVEHIERITALILEICGGQAGPVDDHIVNLPQRRPVSLRLARAERVLGIELSSAVVADVFQRLQLPFTRSQGADGEVFEVTPPSYRFDIEIEEDLIEEVARIYGFERIAARPPVAESEMRPTNEGRRSTHVVRHALAARDYQEVINFAFVEEKWERDFAANDNPIRLLNPIASQLAVMRSSLIGGLLDKVRYNLNRKAARVRLFEVGRVFHRDADVKDGGLTVAGYHQPMMAAGIAYGPAFEEQWGITTRNVDFFDVKGDVETLFYPRVARFEPVEHPALHPGRAARMLIDGKPVGVVGEMHPRWLQEYELTQAPVLFELELDALREAGLPTYAEISKFPAAVRDLAVVVKQSVRVQDMLDSMRAALDKQGCGRFCQSLVLFDEFRPKAASAAIGADEKSLAFRVTLQDTGSTLQDETVDSAVRCMVDALGEAFQARLRG</sequence>
<gene>
    <name evidence="1" type="primary">pheT</name>
    <name type="ordered locus">Reut_A1280</name>
</gene>
<reference key="1">
    <citation type="journal article" date="2010" name="PLoS ONE">
        <title>The complete multipartite genome sequence of Cupriavidus necator JMP134, a versatile pollutant degrader.</title>
        <authorList>
            <person name="Lykidis A."/>
            <person name="Perez-Pantoja D."/>
            <person name="Ledger T."/>
            <person name="Mavromatis K."/>
            <person name="Anderson I.J."/>
            <person name="Ivanova N.N."/>
            <person name="Hooper S.D."/>
            <person name="Lapidus A."/>
            <person name="Lucas S."/>
            <person name="Gonzalez B."/>
            <person name="Kyrpides N.C."/>
        </authorList>
    </citation>
    <scope>NUCLEOTIDE SEQUENCE [LARGE SCALE GENOMIC DNA]</scope>
    <source>
        <strain>JMP134 / LMG 1197</strain>
    </source>
</reference>
<protein>
    <recommendedName>
        <fullName evidence="1">Phenylalanine--tRNA ligase beta subunit</fullName>
        <ecNumber evidence="1">6.1.1.20</ecNumber>
    </recommendedName>
    <alternativeName>
        <fullName evidence="1">Phenylalanyl-tRNA synthetase beta subunit</fullName>
        <shortName evidence="1">PheRS</shortName>
    </alternativeName>
</protein>
<accession>Q472N3</accession>
<comment type="catalytic activity">
    <reaction evidence="1">
        <text>tRNA(Phe) + L-phenylalanine + ATP = L-phenylalanyl-tRNA(Phe) + AMP + diphosphate + H(+)</text>
        <dbReference type="Rhea" id="RHEA:19413"/>
        <dbReference type="Rhea" id="RHEA-COMP:9668"/>
        <dbReference type="Rhea" id="RHEA-COMP:9699"/>
        <dbReference type="ChEBI" id="CHEBI:15378"/>
        <dbReference type="ChEBI" id="CHEBI:30616"/>
        <dbReference type="ChEBI" id="CHEBI:33019"/>
        <dbReference type="ChEBI" id="CHEBI:58095"/>
        <dbReference type="ChEBI" id="CHEBI:78442"/>
        <dbReference type="ChEBI" id="CHEBI:78531"/>
        <dbReference type="ChEBI" id="CHEBI:456215"/>
        <dbReference type="EC" id="6.1.1.20"/>
    </reaction>
</comment>
<comment type="cofactor">
    <cofactor evidence="1">
        <name>Mg(2+)</name>
        <dbReference type="ChEBI" id="CHEBI:18420"/>
    </cofactor>
    <text evidence="1">Binds 2 magnesium ions per tetramer.</text>
</comment>
<comment type="subunit">
    <text evidence="1">Tetramer of two alpha and two beta subunits.</text>
</comment>
<comment type="subcellular location">
    <subcellularLocation>
        <location evidence="1">Cytoplasm</location>
    </subcellularLocation>
</comment>
<comment type="similarity">
    <text evidence="1">Belongs to the phenylalanyl-tRNA synthetase beta subunit family. Type 1 subfamily.</text>
</comment>
<proteinExistence type="inferred from homology"/>